<organism>
    <name type="scientific">Sodalis glossinidius (strain morsitans)</name>
    <dbReference type="NCBI Taxonomy" id="343509"/>
    <lineage>
        <taxon>Bacteria</taxon>
        <taxon>Pseudomonadati</taxon>
        <taxon>Pseudomonadota</taxon>
        <taxon>Gammaproteobacteria</taxon>
        <taxon>Enterobacterales</taxon>
        <taxon>Bruguierivoracaceae</taxon>
        <taxon>Sodalis</taxon>
    </lineage>
</organism>
<sequence>MDKKAARIRRATRARRKLQELGATRLVVHRTPRHIYAQVIAPNGSEVLVAASTVEKAIAEQLKGTGNKDAAAAVGKTIAVRALEKGIKDVSFDRSGFQYHGRVQALADAAREAGLQF</sequence>
<accession>Q2NQN8</accession>
<comment type="function">
    <text evidence="1">This is one of the proteins that bind and probably mediate the attachment of the 5S RNA into the large ribosomal subunit, where it forms part of the central protuberance.</text>
</comment>
<comment type="subunit">
    <text evidence="1">Part of the 50S ribosomal subunit; part of the 5S rRNA/L5/L18/L25 subcomplex. Contacts the 5S and 23S rRNAs.</text>
</comment>
<comment type="similarity">
    <text evidence="1">Belongs to the universal ribosomal protein uL18 family.</text>
</comment>
<protein>
    <recommendedName>
        <fullName evidence="1">Large ribosomal subunit protein uL18</fullName>
    </recommendedName>
    <alternativeName>
        <fullName evidence="2">50S ribosomal protein L18</fullName>
    </alternativeName>
</protein>
<feature type="chain" id="PRO_0000251371" description="Large ribosomal subunit protein uL18">
    <location>
        <begin position="1"/>
        <end position="117"/>
    </location>
</feature>
<gene>
    <name evidence="1" type="primary">rplR</name>
    <name type="ordered locus">SG2262</name>
</gene>
<reference key="1">
    <citation type="journal article" date="2006" name="Genome Res.">
        <title>Massive genome erosion and functional adaptations provide insights into the symbiotic lifestyle of Sodalis glossinidius in the tsetse host.</title>
        <authorList>
            <person name="Toh H."/>
            <person name="Weiss B.L."/>
            <person name="Perkin S.A.H."/>
            <person name="Yamashita A."/>
            <person name="Oshima K."/>
            <person name="Hattori M."/>
            <person name="Aksoy S."/>
        </authorList>
    </citation>
    <scope>NUCLEOTIDE SEQUENCE [LARGE SCALE GENOMIC DNA]</scope>
    <source>
        <strain>morsitans</strain>
    </source>
</reference>
<evidence type="ECO:0000255" key="1">
    <source>
        <dbReference type="HAMAP-Rule" id="MF_01337"/>
    </source>
</evidence>
<evidence type="ECO:0000305" key="2"/>
<proteinExistence type="inferred from homology"/>
<keyword id="KW-0687">Ribonucleoprotein</keyword>
<keyword id="KW-0689">Ribosomal protein</keyword>
<keyword id="KW-0694">RNA-binding</keyword>
<keyword id="KW-0699">rRNA-binding</keyword>
<dbReference type="EMBL" id="AP008232">
    <property type="protein sequence ID" value="BAE75537.1"/>
    <property type="molecule type" value="Genomic_DNA"/>
</dbReference>
<dbReference type="RefSeq" id="WP_011412072.1">
    <property type="nucleotide sequence ID" value="NC_007712.1"/>
</dbReference>
<dbReference type="SMR" id="Q2NQN8"/>
<dbReference type="STRING" id="343509.SG2262"/>
<dbReference type="KEGG" id="sgl:SG2262"/>
<dbReference type="eggNOG" id="COG0256">
    <property type="taxonomic scope" value="Bacteria"/>
</dbReference>
<dbReference type="HOGENOM" id="CLU_098841_0_1_6"/>
<dbReference type="OrthoDB" id="9810939at2"/>
<dbReference type="BioCyc" id="SGLO343509:SGP1_RS20760-MONOMER"/>
<dbReference type="Proteomes" id="UP000001932">
    <property type="component" value="Chromosome"/>
</dbReference>
<dbReference type="GO" id="GO:0022625">
    <property type="term" value="C:cytosolic large ribosomal subunit"/>
    <property type="evidence" value="ECO:0007669"/>
    <property type="project" value="TreeGrafter"/>
</dbReference>
<dbReference type="GO" id="GO:0008097">
    <property type="term" value="F:5S rRNA binding"/>
    <property type="evidence" value="ECO:0007669"/>
    <property type="project" value="TreeGrafter"/>
</dbReference>
<dbReference type="GO" id="GO:0003735">
    <property type="term" value="F:structural constituent of ribosome"/>
    <property type="evidence" value="ECO:0007669"/>
    <property type="project" value="InterPro"/>
</dbReference>
<dbReference type="GO" id="GO:0006412">
    <property type="term" value="P:translation"/>
    <property type="evidence" value="ECO:0007669"/>
    <property type="project" value="UniProtKB-UniRule"/>
</dbReference>
<dbReference type="CDD" id="cd00432">
    <property type="entry name" value="Ribosomal_L18_L5e"/>
    <property type="match status" value="1"/>
</dbReference>
<dbReference type="FunFam" id="3.30.420.100:FF:000001">
    <property type="entry name" value="50S ribosomal protein L18"/>
    <property type="match status" value="1"/>
</dbReference>
<dbReference type="Gene3D" id="3.30.420.100">
    <property type="match status" value="1"/>
</dbReference>
<dbReference type="HAMAP" id="MF_01337_B">
    <property type="entry name" value="Ribosomal_uL18_B"/>
    <property type="match status" value="1"/>
</dbReference>
<dbReference type="InterPro" id="IPR004389">
    <property type="entry name" value="Ribosomal_uL18_bac-type"/>
</dbReference>
<dbReference type="InterPro" id="IPR005484">
    <property type="entry name" value="Ribosomal_uL18_bac/euk"/>
</dbReference>
<dbReference type="NCBIfam" id="TIGR00060">
    <property type="entry name" value="L18_bact"/>
    <property type="match status" value="1"/>
</dbReference>
<dbReference type="PANTHER" id="PTHR12899">
    <property type="entry name" value="39S RIBOSOMAL PROTEIN L18, MITOCHONDRIAL"/>
    <property type="match status" value="1"/>
</dbReference>
<dbReference type="PANTHER" id="PTHR12899:SF3">
    <property type="entry name" value="LARGE RIBOSOMAL SUBUNIT PROTEIN UL18M"/>
    <property type="match status" value="1"/>
</dbReference>
<dbReference type="Pfam" id="PF00861">
    <property type="entry name" value="Ribosomal_L18p"/>
    <property type="match status" value="1"/>
</dbReference>
<dbReference type="SUPFAM" id="SSF53137">
    <property type="entry name" value="Translational machinery components"/>
    <property type="match status" value="1"/>
</dbReference>
<name>RL18_SODGM</name>